<protein>
    <recommendedName>
        <fullName evidence="3">Zinc-type alcohol dehydrogenase B</fullName>
        <ecNumber evidence="2">1.1.1.1</ecNumber>
    </recommendedName>
</protein>
<gene>
    <name evidence="3" type="primary">adhB</name>
    <name type="ORF">F9C07_7207</name>
</gene>
<accession>A0A7U2MMF3</accession>
<comment type="function">
    <text evidence="2">Zinc-type alcohol dehydrogenase involved in development, secondary metabolism, pathogenicity, and stress response (PubMed:39601562). Specifically controls the formation of sclerotia and the biosynthesis of aflatoxin (PubMed:39601562). Contribute to seed colonization of A flavus on host maize seed (PubMed:39601562).</text>
</comment>
<comment type="catalytic activity">
    <reaction evidence="1">
        <text>a primary alcohol + NAD(+) = an aldehyde + NADH + H(+)</text>
        <dbReference type="Rhea" id="RHEA:10736"/>
        <dbReference type="ChEBI" id="CHEBI:15378"/>
        <dbReference type="ChEBI" id="CHEBI:15734"/>
        <dbReference type="ChEBI" id="CHEBI:17478"/>
        <dbReference type="ChEBI" id="CHEBI:57540"/>
        <dbReference type="ChEBI" id="CHEBI:57945"/>
        <dbReference type="EC" id="1.1.1.1"/>
    </reaction>
    <physiologicalReaction direction="left-to-right" evidence="1">
        <dbReference type="Rhea" id="RHEA:10737"/>
    </physiologicalReaction>
</comment>
<comment type="catalytic activity">
    <reaction evidence="1">
        <text>a secondary alcohol + NAD(+) = a ketone + NADH + H(+)</text>
        <dbReference type="Rhea" id="RHEA:10740"/>
        <dbReference type="ChEBI" id="CHEBI:15378"/>
        <dbReference type="ChEBI" id="CHEBI:17087"/>
        <dbReference type="ChEBI" id="CHEBI:35681"/>
        <dbReference type="ChEBI" id="CHEBI:57540"/>
        <dbReference type="ChEBI" id="CHEBI:57945"/>
        <dbReference type="EC" id="1.1.1.1"/>
    </reaction>
    <physiologicalReaction direction="left-to-right" evidence="1">
        <dbReference type="Rhea" id="RHEA:10741"/>
    </physiologicalReaction>
</comment>
<comment type="cofactor">
    <cofactor evidence="1">
        <name>Zn(2+)</name>
        <dbReference type="ChEBI" id="CHEBI:29105"/>
    </cofactor>
    <text evidence="1">Binds 2 Zn(2+) ions per subunit.</text>
</comment>
<comment type="subunit">
    <text evidence="1">Homodimer.</text>
</comment>
<comment type="PTM">
    <text evidence="2">Benzoylation at lys-393 by gcnE leads to the activation od adhB.</text>
</comment>
<comment type="disruption phenotype">
    <text evidence="2">Leads to decreased conidiation and seed colonization, increased sclerotia formation and aflatoxin production, and increased sensitivity to cell wall damage stress.</text>
</comment>
<comment type="similarity">
    <text evidence="4">Belongs to the zinc-containing alcohol dehydrogenase family. Class-III subfamily.</text>
</comment>
<organism>
    <name type="scientific">Aspergillus flavus (strain ATCC 200026 / FGSC A1120 / IAM 13836 / NRRL 3357 / JCM 12722 / SRRC 167)</name>
    <dbReference type="NCBI Taxonomy" id="332952"/>
    <lineage>
        <taxon>Eukaryota</taxon>
        <taxon>Fungi</taxon>
        <taxon>Dikarya</taxon>
        <taxon>Ascomycota</taxon>
        <taxon>Pezizomycotina</taxon>
        <taxon>Eurotiomycetes</taxon>
        <taxon>Eurotiomycetidae</taxon>
        <taxon>Eurotiales</taxon>
        <taxon>Aspergillaceae</taxon>
        <taxon>Aspergillus</taxon>
        <taxon>Aspergillus subgen. Circumdati</taxon>
    </lineage>
</organism>
<dbReference type="EC" id="1.1.1.1" evidence="2"/>
<dbReference type="EMBL" id="CP044620">
    <property type="protein sequence ID" value="QRD86356.1"/>
    <property type="molecule type" value="Genomic_DNA"/>
</dbReference>
<dbReference type="RefSeq" id="XP_002379342.1">
    <property type="nucleotide sequence ID" value="XM_002379301.1"/>
</dbReference>
<dbReference type="OMA" id="MRATTIH"/>
<dbReference type="Proteomes" id="UP000596276">
    <property type="component" value="Chromosome 3"/>
</dbReference>
<dbReference type="GO" id="GO:0016491">
    <property type="term" value="F:oxidoreductase activity"/>
    <property type="evidence" value="ECO:0007669"/>
    <property type="project" value="UniProtKB-KW"/>
</dbReference>
<dbReference type="GO" id="GO:0008270">
    <property type="term" value="F:zinc ion binding"/>
    <property type="evidence" value="ECO:0007669"/>
    <property type="project" value="InterPro"/>
</dbReference>
<dbReference type="CDD" id="cd08284">
    <property type="entry name" value="FDH_like_2"/>
    <property type="match status" value="1"/>
</dbReference>
<dbReference type="Gene3D" id="3.90.180.10">
    <property type="entry name" value="Medium-chain alcohol dehydrogenases, catalytic domain"/>
    <property type="match status" value="1"/>
</dbReference>
<dbReference type="Gene3D" id="3.40.50.720">
    <property type="entry name" value="NAD(P)-binding Rossmann-like Domain"/>
    <property type="match status" value="1"/>
</dbReference>
<dbReference type="InterPro" id="IPR013149">
    <property type="entry name" value="ADH-like_C"/>
</dbReference>
<dbReference type="InterPro" id="IPR013154">
    <property type="entry name" value="ADH-like_N"/>
</dbReference>
<dbReference type="InterPro" id="IPR002328">
    <property type="entry name" value="ADH_Zn_CS"/>
</dbReference>
<dbReference type="InterPro" id="IPR011032">
    <property type="entry name" value="GroES-like_sf"/>
</dbReference>
<dbReference type="InterPro" id="IPR036291">
    <property type="entry name" value="NAD(P)-bd_dom_sf"/>
</dbReference>
<dbReference type="InterPro" id="IPR020843">
    <property type="entry name" value="PKS_ER"/>
</dbReference>
<dbReference type="PANTHER" id="PTHR42813:SF2">
    <property type="entry name" value="DEHYDROGENASE, ZINC-CONTAINING, PUTATIVE (AFU_ORTHOLOGUE AFUA_2G02810)-RELATED"/>
    <property type="match status" value="1"/>
</dbReference>
<dbReference type="PANTHER" id="PTHR42813">
    <property type="entry name" value="ZINC-TYPE ALCOHOL DEHYDROGENASE-LIKE"/>
    <property type="match status" value="1"/>
</dbReference>
<dbReference type="Pfam" id="PF08240">
    <property type="entry name" value="ADH_N"/>
    <property type="match status" value="1"/>
</dbReference>
<dbReference type="Pfam" id="PF00107">
    <property type="entry name" value="ADH_zinc_N"/>
    <property type="match status" value="1"/>
</dbReference>
<dbReference type="SMART" id="SM00829">
    <property type="entry name" value="PKS_ER"/>
    <property type="match status" value="1"/>
</dbReference>
<dbReference type="SUPFAM" id="SSF50129">
    <property type="entry name" value="GroES-like"/>
    <property type="match status" value="1"/>
</dbReference>
<dbReference type="SUPFAM" id="SSF51735">
    <property type="entry name" value="NAD(P)-binding Rossmann-fold domains"/>
    <property type="match status" value="1"/>
</dbReference>
<dbReference type="PROSITE" id="PS00059">
    <property type="entry name" value="ADH_ZINC"/>
    <property type="match status" value="1"/>
</dbReference>
<feature type="chain" id="PRO_0000462189" description="Zinc-type alcohol dehydrogenase B">
    <location>
        <begin position="1"/>
        <end position="428"/>
    </location>
</feature>
<feature type="binding site" evidence="1">
    <location>
        <position position="116"/>
    </location>
    <ligand>
        <name>Zn(2+)</name>
        <dbReference type="ChEBI" id="CHEBI:29105"/>
        <label>1</label>
        <note>catalytic</note>
    </ligand>
</feature>
<feature type="binding site" evidence="1">
    <location>
        <position position="137"/>
    </location>
    <ligand>
        <name>Zn(2+)</name>
        <dbReference type="ChEBI" id="CHEBI:29105"/>
        <label>1</label>
        <note>catalytic</note>
    </ligand>
</feature>
<feature type="binding site" evidence="1">
    <location>
        <position position="167"/>
    </location>
    <ligand>
        <name>Zn(2+)</name>
        <dbReference type="ChEBI" id="CHEBI:29105"/>
        <label>2</label>
    </ligand>
</feature>
<feature type="binding site" evidence="1">
    <location>
        <position position="170"/>
    </location>
    <ligand>
        <name>Zn(2+)</name>
        <dbReference type="ChEBI" id="CHEBI:29105"/>
        <label>2</label>
    </ligand>
</feature>
<feature type="binding site" evidence="1">
    <location>
        <position position="173"/>
    </location>
    <ligand>
        <name>Zn(2+)</name>
        <dbReference type="ChEBI" id="CHEBI:29105"/>
        <label>2</label>
    </ligand>
</feature>
<feature type="binding site" evidence="1">
    <location>
        <position position="181"/>
    </location>
    <ligand>
        <name>Zn(2+)</name>
        <dbReference type="ChEBI" id="CHEBI:29105"/>
        <label>2</label>
    </ligand>
</feature>
<feature type="modified residue" description="N6-benzoyllysine" evidence="2">
    <location>
        <position position="393"/>
    </location>
</feature>
<feature type="mutagenesis site" description="Significantly reduces the alcohol dehydrogenase activity and leads to decreased conidiation and seed colonization, increased sclerotia formation and aflatoxin production, and increased sensitivity to cell wall damage stress." evidence="2">
    <original>K</original>
    <variation>A</variation>
    <variation>R</variation>
    <location>
        <position position="393"/>
    </location>
</feature>
<sequence length="428" mass="46647">MLEILADESVGGNSPTVIINRGAKKMQWPFIGCGGLGFSKTAHFTCFDSMTQLCEEDIPCIHLPPQHRSVYKMSTENKMRAVVFHSPYKVAVEERPIPKIQDSGDIVVKVTYTALCGSDLHTFRGIEPAGTGFVMGHEVTGEVVEVGSGVKSIQKGDMVVSAFTTSCGECFYCKQGFSSRCEKSVLFGCDHLDGAQAEYVRIPNADGTVMKAPEGVEEKYLVLMADIFPTGYFAASNAFKGYTPEQISEQTVVLIGCGPVGLCALINALEFKPKHLLAVDSIPSRLELARSLGAEPWNFQQDREGLDKRVKELTNGRGADAVIEVVGLSPALRTGFDLLRPWGTISSVGVHNGEIPWAGNDAYDKNLRIQMGRCPVRSVSPQALDVLKKNQHKLGFMADKIMPLSQAVEGYELFNAMKVQKVIFKAGE</sequence>
<name>ADHB_ASPFN</name>
<evidence type="ECO:0000250" key="1">
    <source>
        <dbReference type="UniProtKB" id="P11766"/>
    </source>
</evidence>
<evidence type="ECO:0000269" key="2">
    <source>
    </source>
</evidence>
<evidence type="ECO:0000303" key="3">
    <source>
    </source>
</evidence>
<evidence type="ECO:0000305" key="4"/>
<keyword id="KW-0479">Metal-binding</keyword>
<keyword id="KW-0560">Oxidoreductase</keyword>
<keyword id="KW-1185">Reference proteome</keyword>
<keyword id="KW-0843">Virulence</keyword>
<keyword id="KW-0862">Zinc</keyword>
<reference key="1">
    <citation type="journal article" date="2021" name="G3 (Bethesda)">
        <title>Chromosome assembled and annotated genome sequence of Aspergillus flavus NRRL 3357.</title>
        <authorList>
            <person name="Skerker J.M."/>
            <person name="Pianalto K.M."/>
            <person name="Mondo S.J."/>
            <person name="Yang K."/>
            <person name="Arkin A.P."/>
            <person name="Keller N.P."/>
            <person name="Grigoriev I.V."/>
            <person name="Glass N.L."/>
        </authorList>
    </citation>
    <scope>NUCLEOTIDE SEQUENCE [LARGE SCALE GENOMIC DNA]</scope>
    <source>
        <strain>ATCC 200026 / FGSC A1120 / IAM 13836 / NRRL 3357 / JCM 12722 / SRRC 167</strain>
    </source>
</reference>
<reference key="2">
    <citation type="journal article" date="2025" name="MBio">
        <title>Importance of benzoyltransferase GcnE and lysine benzoylation of alcohol dehydrogenase AdhB in pathogenesis and aflatoxin production in Aspergillus flavus.</title>
        <authorList>
            <person name="Chen X."/>
            <person name="Wu L."/>
            <person name="Zhang Y."/>
            <person name="Wang S."/>
            <person name="Wang S."/>
        </authorList>
    </citation>
    <scope>FUNCTION</scope>
    <scope>CATALYTIC ACTIVITY</scope>
    <scope>BENZOYLATION AT LYS-393</scope>
    <scope>MUTAGENESIS OF LYS-393</scope>
    <scope>DISRUPTION PHENOTYPE</scope>
</reference>
<proteinExistence type="evidence at protein level"/>